<proteinExistence type="evidence at transcript level"/>
<name>PMP22_PONAB</name>
<gene>
    <name type="primary">PMP22</name>
</gene>
<protein>
    <recommendedName>
        <fullName>Peripheral myelin protein 22</fullName>
        <shortName>PMP-22</shortName>
    </recommendedName>
</protein>
<comment type="function">
    <text evidence="1">Might be involved in growth regulation, and in myelinization in the peripheral nervous system.</text>
</comment>
<comment type="subcellular location">
    <subcellularLocation>
        <location evidence="1">Cell membrane</location>
        <topology evidence="1">Multi-pass membrane protein</topology>
    </subcellularLocation>
</comment>
<comment type="PTM">
    <text evidence="2">Ubiquitinated by the DCX(DCAF13) E3 ubiquitin ligase complex, leading to its degradation.</text>
</comment>
<comment type="similarity">
    <text evidence="4">Belongs to the PMP-22/EMP/MP20 family.</text>
</comment>
<accession>Q5RAZ3</accession>
<organism>
    <name type="scientific">Pongo abelii</name>
    <name type="common">Sumatran orangutan</name>
    <name type="synonym">Pongo pygmaeus abelii</name>
    <dbReference type="NCBI Taxonomy" id="9601"/>
    <lineage>
        <taxon>Eukaryota</taxon>
        <taxon>Metazoa</taxon>
        <taxon>Chordata</taxon>
        <taxon>Craniata</taxon>
        <taxon>Vertebrata</taxon>
        <taxon>Euteleostomi</taxon>
        <taxon>Mammalia</taxon>
        <taxon>Eutheria</taxon>
        <taxon>Euarchontoglires</taxon>
        <taxon>Primates</taxon>
        <taxon>Haplorrhini</taxon>
        <taxon>Catarrhini</taxon>
        <taxon>Hominidae</taxon>
        <taxon>Pongo</taxon>
    </lineage>
</organism>
<dbReference type="EMBL" id="CR858868">
    <property type="protein sequence ID" value="CAH91067.1"/>
    <property type="molecule type" value="mRNA"/>
</dbReference>
<dbReference type="RefSeq" id="NP_001125617.1">
    <property type="nucleotide sequence ID" value="NM_001132145.1"/>
</dbReference>
<dbReference type="RefSeq" id="XP_009249591.1">
    <property type="nucleotide sequence ID" value="XM_009251316.3"/>
</dbReference>
<dbReference type="SMR" id="Q5RAZ3"/>
<dbReference type="FunCoup" id="Q5RAZ3">
    <property type="interactions" value="661"/>
</dbReference>
<dbReference type="GlyCosmos" id="Q5RAZ3">
    <property type="glycosylation" value="1 site, No reported glycans"/>
</dbReference>
<dbReference type="GeneID" id="100172535"/>
<dbReference type="KEGG" id="pon:100172535"/>
<dbReference type="CTD" id="5376"/>
<dbReference type="InParanoid" id="Q5RAZ3"/>
<dbReference type="OrthoDB" id="6084046at2759"/>
<dbReference type="Proteomes" id="UP000001595">
    <property type="component" value="Unplaced"/>
</dbReference>
<dbReference type="GO" id="GO:0005886">
    <property type="term" value="C:plasma membrane"/>
    <property type="evidence" value="ECO:0007669"/>
    <property type="project" value="UniProtKB-SubCell"/>
</dbReference>
<dbReference type="GO" id="GO:0051726">
    <property type="term" value="P:regulation of cell cycle"/>
    <property type="evidence" value="ECO:0007669"/>
    <property type="project" value="UniProtKB-KW"/>
</dbReference>
<dbReference type="FunFam" id="1.20.140.150:FF:000019">
    <property type="entry name" value="Peripheral myelin protein 22"/>
    <property type="match status" value="1"/>
</dbReference>
<dbReference type="Gene3D" id="1.20.140.150">
    <property type="match status" value="1"/>
</dbReference>
<dbReference type="InterPro" id="IPR050579">
    <property type="entry name" value="PMP-22/EMP/MP20-like"/>
</dbReference>
<dbReference type="InterPro" id="IPR003936">
    <property type="entry name" value="PMP22"/>
</dbReference>
<dbReference type="InterPro" id="IPR004031">
    <property type="entry name" value="PMP22/EMP/MP20/Claudin"/>
</dbReference>
<dbReference type="InterPro" id="IPR004032">
    <property type="entry name" value="PMP22_EMP_MP20"/>
</dbReference>
<dbReference type="PANTHER" id="PTHR10671">
    <property type="entry name" value="EPITHELIAL MEMBRANE PROTEIN-RELATED"/>
    <property type="match status" value="1"/>
</dbReference>
<dbReference type="PANTHER" id="PTHR10671:SF7">
    <property type="entry name" value="PERIPHERAL MYELIN PROTEIN 22"/>
    <property type="match status" value="1"/>
</dbReference>
<dbReference type="Pfam" id="PF00822">
    <property type="entry name" value="PMP22_Claudin"/>
    <property type="match status" value="1"/>
</dbReference>
<dbReference type="PRINTS" id="PR01453">
    <property type="entry name" value="EPMEMFAMILY"/>
</dbReference>
<dbReference type="PRINTS" id="PR01458">
    <property type="entry name" value="PMYELIN22"/>
</dbReference>
<dbReference type="PROSITE" id="PS01221">
    <property type="entry name" value="PMP22_1"/>
    <property type="match status" value="1"/>
</dbReference>
<dbReference type="PROSITE" id="PS01222">
    <property type="entry name" value="PMP22_2"/>
    <property type="match status" value="1"/>
</dbReference>
<sequence>MLLLLLSIIVLHVAVLVLLFVSTIVSQWIVGNGHATDLWQNCSTSSSGNVHHCFSSSPNEWLQSVQATMILSIIFSILSLFLFFCQLFTLTKGGRFYITGIFQILAGLCVMSAAAIYTVRHPEWHLNSDYSYGFAYILAWVAFPLALLSGVIYVILRKRE</sequence>
<evidence type="ECO:0000250" key="1"/>
<evidence type="ECO:0000250" key="2">
    <source>
        <dbReference type="UniProtKB" id="P16646"/>
    </source>
</evidence>
<evidence type="ECO:0000255" key="3"/>
<evidence type="ECO:0000305" key="4"/>
<keyword id="KW-0131">Cell cycle</keyword>
<keyword id="KW-1003">Cell membrane</keyword>
<keyword id="KW-0325">Glycoprotein</keyword>
<keyword id="KW-0338">Growth arrest</keyword>
<keyword id="KW-0472">Membrane</keyword>
<keyword id="KW-1185">Reference proteome</keyword>
<keyword id="KW-0812">Transmembrane</keyword>
<keyword id="KW-1133">Transmembrane helix</keyword>
<keyword id="KW-0832">Ubl conjugation</keyword>
<reference key="1">
    <citation type="submission" date="2004-11" db="EMBL/GenBank/DDBJ databases">
        <authorList>
            <consortium name="The German cDNA consortium"/>
        </authorList>
    </citation>
    <scope>NUCLEOTIDE SEQUENCE [LARGE SCALE MRNA]</scope>
    <source>
        <tissue>Heart</tissue>
    </source>
</reference>
<feature type="chain" id="PRO_0000256844" description="Peripheral myelin protein 22">
    <location>
        <begin position="1"/>
        <end position="160"/>
    </location>
</feature>
<feature type="topological domain" description="Cytoplasmic" evidence="3">
    <location>
        <position position="1"/>
    </location>
</feature>
<feature type="transmembrane region" description="Helical" evidence="1">
    <location>
        <begin position="2"/>
        <end position="31"/>
    </location>
</feature>
<feature type="topological domain" description="Extracellular" evidence="3">
    <location>
        <begin position="32"/>
        <end position="64"/>
    </location>
</feature>
<feature type="transmembrane region" description="Helical" evidence="1">
    <location>
        <begin position="65"/>
        <end position="91"/>
    </location>
</feature>
<feature type="topological domain" description="Cytoplasmic" evidence="3">
    <location>
        <begin position="92"/>
        <end position="95"/>
    </location>
</feature>
<feature type="transmembrane region" description="Helical" evidence="1">
    <location>
        <begin position="96"/>
        <end position="119"/>
    </location>
</feature>
<feature type="topological domain" description="Extracellular" evidence="3">
    <location>
        <begin position="120"/>
        <end position="133"/>
    </location>
</feature>
<feature type="transmembrane region" description="Helical" evidence="1">
    <location>
        <begin position="134"/>
        <end position="156"/>
    </location>
</feature>
<feature type="topological domain" description="Cytoplasmic" evidence="3">
    <location>
        <begin position="157"/>
        <end position="160"/>
    </location>
</feature>
<feature type="glycosylation site" description="N-linked (GlcNAc...) asparagine" evidence="3">
    <location>
        <position position="41"/>
    </location>
</feature>